<name>TBB1_ECHMU</name>
<dbReference type="EMBL" id="AJ249548">
    <property type="protein sequence ID" value="CAB91640.1"/>
    <property type="molecule type" value="Genomic_DNA"/>
</dbReference>
<dbReference type="SMR" id="Q9NFZ7"/>
<dbReference type="eggNOG" id="KOG1375">
    <property type="taxonomic scope" value="Eukaryota"/>
</dbReference>
<dbReference type="GO" id="GO:0005737">
    <property type="term" value="C:cytoplasm"/>
    <property type="evidence" value="ECO:0007669"/>
    <property type="project" value="UniProtKB-KW"/>
</dbReference>
<dbReference type="GO" id="GO:0005874">
    <property type="term" value="C:microtubule"/>
    <property type="evidence" value="ECO:0007669"/>
    <property type="project" value="UniProtKB-KW"/>
</dbReference>
<dbReference type="GO" id="GO:0005525">
    <property type="term" value="F:GTP binding"/>
    <property type="evidence" value="ECO:0007669"/>
    <property type="project" value="UniProtKB-KW"/>
</dbReference>
<dbReference type="GO" id="GO:0003924">
    <property type="term" value="F:GTPase activity"/>
    <property type="evidence" value="ECO:0007669"/>
    <property type="project" value="InterPro"/>
</dbReference>
<dbReference type="GO" id="GO:0046872">
    <property type="term" value="F:metal ion binding"/>
    <property type="evidence" value="ECO:0007669"/>
    <property type="project" value="UniProtKB-KW"/>
</dbReference>
<dbReference type="GO" id="GO:0005200">
    <property type="term" value="F:structural constituent of cytoskeleton"/>
    <property type="evidence" value="ECO:0007669"/>
    <property type="project" value="InterPro"/>
</dbReference>
<dbReference type="GO" id="GO:0007017">
    <property type="term" value="P:microtubule-based process"/>
    <property type="evidence" value="ECO:0007669"/>
    <property type="project" value="InterPro"/>
</dbReference>
<dbReference type="CDD" id="cd02187">
    <property type="entry name" value="beta_tubulin"/>
    <property type="match status" value="1"/>
</dbReference>
<dbReference type="FunFam" id="1.10.287.600:FF:000002">
    <property type="entry name" value="Tubulin beta chain"/>
    <property type="match status" value="1"/>
</dbReference>
<dbReference type="FunFam" id="3.30.1330.20:FF:000002">
    <property type="entry name" value="Tubulin beta chain"/>
    <property type="match status" value="1"/>
</dbReference>
<dbReference type="FunFam" id="3.40.50.1440:FF:000003">
    <property type="entry name" value="Tubulin beta chain"/>
    <property type="match status" value="1"/>
</dbReference>
<dbReference type="Gene3D" id="1.10.287.600">
    <property type="entry name" value="Helix hairpin bin"/>
    <property type="match status" value="1"/>
</dbReference>
<dbReference type="Gene3D" id="3.30.1330.20">
    <property type="entry name" value="Tubulin/FtsZ, C-terminal domain"/>
    <property type="match status" value="1"/>
</dbReference>
<dbReference type="Gene3D" id="3.40.50.1440">
    <property type="entry name" value="Tubulin/FtsZ, GTPase domain"/>
    <property type="match status" value="1"/>
</dbReference>
<dbReference type="InterPro" id="IPR013838">
    <property type="entry name" value="Beta-tubulin_BS"/>
</dbReference>
<dbReference type="InterPro" id="IPR002453">
    <property type="entry name" value="Beta_tubulin"/>
</dbReference>
<dbReference type="InterPro" id="IPR008280">
    <property type="entry name" value="Tub_FtsZ_C"/>
</dbReference>
<dbReference type="InterPro" id="IPR000217">
    <property type="entry name" value="Tubulin"/>
</dbReference>
<dbReference type="InterPro" id="IPR037103">
    <property type="entry name" value="Tubulin/FtsZ-like_C"/>
</dbReference>
<dbReference type="InterPro" id="IPR018316">
    <property type="entry name" value="Tubulin/FtsZ_2-layer-sand-dom"/>
</dbReference>
<dbReference type="InterPro" id="IPR036525">
    <property type="entry name" value="Tubulin/FtsZ_GTPase_sf"/>
</dbReference>
<dbReference type="InterPro" id="IPR023123">
    <property type="entry name" value="Tubulin_C"/>
</dbReference>
<dbReference type="InterPro" id="IPR017975">
    <property type="entry name" value="Tubulin_CS"/>
</dbReference>
<dbReference type="InterPro" id="IPR003008">
    <property type="entry name" value="Tubulin_FtsZ_GTPase"/>
</dbReference>
<dbReference type="PANTHER" id="PTHR11588">
    <property type="entry name" value="TUBULIN"/>
    <property type="match status" value="1"/>
</dbReference>
<dbReference type="Pfam" id="PF00091">
    <property type="entry name" value="Tubulin"/>
    <property type="match status" value="1"/>
</dbReference>
<dbReference type="Pfam" id="PF03953">
    <property type="entry name" value="Tubulin_C"/>
    <property type="match status" value="1"/>
</dbReference>
<dbReference type="PRINTS" id="PR01163">
    <property type="entry name" value="BETATUBULIN"/>
</dbReference>
<dbReference type="PRINTS" id="PR01161">
    <property type="entry name" value="TUBULIN"/>
</dbReference>
<dbReference type="SMART" id="SM00864">
    <property type="entry name" value="Tubulin"/>
    <property type="match status" value="1"/>
</dbReference>
<dbReference type="SMART" id="SM00865">
    <property type="entry name" value="Tubulin_C"/>
    <property type="match status" value="1"/>
</dbReference>
<dbReference type="SUPFAM" id="SSF55307">
    <property type="entry name" value="Tubulin C-terminal domain-like"/>
    <property type="match status" value="1"/>
</dbReference>
<dbReference type="SUPFAM" id="SSF52490">
    <property type="entry name" value="Tubulin nucleotide-binding domain-like"/>
    <property type="match status" value="1"/>
</dbReference>
<dbReference type="PROSITE" id="PS00227">
    <property type="entry name" value="TUBULIN"/>
    <property type="match status" value="1"/>
</dbReference>
<dbReference type="PROSITE" id="PS00228">
    <property type="entry name" value="TUBULIN_B_AUTOREG"/>
    <property type="match status" value="1"/>
</dbReference>
<gene>
    <name type="primary">TUB-1</name>
</gene>
<proteinExistence type="inferred from homology"/>
<feature type="chain" id="PRO_0000048290" description="Tubulin beta-1 chain">
    <location>
        <begin position="1"/>
        <end position="448"/>
    </location>
</feature>
<feature type="region of interest" description="Disordered" evidence="4">
    <location>
        <begin position="428"/>
        <end position="448"/>
    </location>
</feature>
<feature type="compositionally biased region" description="Acidic residues" evidence="4">
    <location>
        <begin position="430"/>
        <end position="448"/>
    </location>
</feature>
<feature type="binding site" evidence="3">
    <location>
        <position position="11"/>
    </location>
    <ligand>
        <name>GTP</name>
        <dbReference type="ChEBI" id="CHEBI:37565"/>
    </ligand>
</feature>
<feature type="binding site" evidence="2">
    <location>
        <position position="69"/>
    </location>
    <ligand>
        <name>GTP</name>
        <dbReference type="ChEBI" id="CHEBI:37565"/>
    </ligand>
</feature>
<feature type="binding site" evidence="2">
    <location>
        <position position="69"/>
    </location>
    <ligand>
        <name>Mg(2+)</name>
        <dbReference type="ChEBI" id="CHEBI:18420"/>
    </ligand>
</feature>
<feature type="binding site" evidence="3">
    <location>
        <position position="138"/>
    </location>
    <ligand>
        <name>GTP</name>
        <dbReference type="ChEBI" id="CHEBI:37565"/>
    </ligand>
</feature>
<feature type="binding site" evidence="3">
    <location>
        <position position="142"/>
    </location>
    <ligand>
        <name>GTP</name>
        <dbReference type="ChEBI" id="CHEBI:37565"/>
    </ligand>
</feature>
<feature type="binding site" evidence="3">
    <location>
        <position position="143"/>
    </location>
    <ligand>
        <name>GTP</name>
        <dbReference type="ChEBI" id="CHEBI:37565"/>
    </ligand>
</feature>
<feature type="binding site" evidence="3">
    <location>
        <position position="144"/>
    </location>
    <ligand>
        <name>GTP</name>
        <dbReference type="ChEBI" id="CHEBI:37565"/>
    </ligand>
</feature>
<feature type="binding site" evidence="3">
    <location>
        <position position="204"/>
    </location>
    <ligand>
        <name>GTP</name>
        <dbReference type="ChEBI" id="CHEBI:37565"/>
    </ligand>
</feature>
<feature type="binding site" evidence="3">
    <location>
        <position position="226"/>
    </location>
    <ligand>
        <name>GTP</name>
        <dbReference type="ChEBI" id="CHEBI:37565"/>
    </ligand>
</feature>
<comment type="function">
    <text>Tubulin is the major constituent of microtubules, a cylinder consisting of laterally associated linear protofilaments composed of alpha- and beta-tubulin heterodimers. Microtubules grow by the addition of GTP-tubulin dimers to the microtubule end, where a stabilizing cap forms. Below the cap, tubulin dimers are in GDP-bound state, owing to GTPase activity of alpha-tubulin.</text>
</comment>
<comment type="cofactor">
    <cofactor evidence="2">
        <name>Mg(2+)</name>
        <dbReference type="ChEBI" id="CHEBI:18420"/>
    </cofactor>
</comment>
<comment type="subunit">
    <text>Dimer of alpha and beta chains. A typical microtubule is a hollow water-filled tube with an outer diameter of 25 nm and an inner diameter of 15 nM. Alpha-beta heterodimers associate head-to-tail to form protofilaments running lengthwise along the microtubule wall with the beta-tubulin subunit facing the microtubule plus end conferring a structural polarity. Microtubules usually have 13 protofilaments but different protofilament numbers can be found in some organisms and specialized cells.</text>
</comment>
<comment type="subcellular location">
    <subcellularLocation>
        <location evidence="1">Cytoplasm</location>
        <location evidence="1">Cytoskeleton</location>
    </subcellularLocation>
</comment>
<comment type="similarity">
    <text evidence="5">Belongs to the tubulin family.</text>
</comment>
<accession>Q9NFZ7</accession>
<keyword id="KW-0963">Cytoplasm</keyword>
<keyword id="KW-0206">Cytoskeleton</keyword>
<keyword id="KW-0342">GTP-binding</keyword>
<keyword id="KW-0460">Magnesium</keyword>
<keyword id="KW-0479">Metal-binding</keyword>
<keyword id="KW-0493">Microtubule</keyword>
<keyword id="KW-0547">Nucleotide-binding</keyword>
<evidence type="ECO:0000250" key="1"/>
<evidence type="ECO:0000250" key="2">
    <source>
        <dbReference type="UniProtKB" id="P68363"/>
    </source>
</evidence>
<evidence type="ECO:0000250" key="3">
    <source>
        <dbReference type="UniProtKB" id="Q13509"/>
    </source>
</evidence>
<evidence type="ECO:0000256" key="4">
    <source>
        <dbReference type="SAM" id="MobiDB-lite"/>
    </source>
</evidence>
<evidence type="ECO:0000305" key="5"/>
<sequence length="448" mass="50211">MREIVHIQAGQCGNQIGSKFWEVISDEHGVDPTGSYHGDSDLQLERINVYYSEASGGKYVPRCVLVDLEPGTMDSVRAGPFGQLFRPDNFVFGQSGAGNNWAKGHYTEGAELVESVLDVIRKECESCDCLQGFQMCHSLGGGTGSGMGTLLISKMREEFPDRIMNTFSVMPSPKVSDTVVEPYNATLSIHQLVENTDETFCIDNEALYDICFRTLKLTNPTYGDLNHLVSATMSGVTTCLRFPGQLNADLRKLAVNMVPFPRLHFFMPGFAPLTSRGSQQYRVLTVAELTQQMFDAKNMMAACDPRHGRYLTVAAMFRGRMSMKEVDDQMLNAQNKNSSYFVEWIPNNVKTAVCDIPPRGLKMSVTFMGNTTAIQEIFKRVSEQFTVMFRRKAFLHWYTGEGMDEMEFTEAESNMNDLVSEYQQYQEAGIGDDEEEDEEGVMGEEIDA</sequence>
<organism>
    <name type="scientific">Echinococcus multilocularis</name>
    <name type="common">Fox tapeworm</name>
    <dbReference type="NCBI Taxonomy" id="6211"/>
    <lineage>
        <taxon>Eukaryota</taxon>
        <taxon>Metazoa</taxon>
        <taxon>Spiralia</taxon>
        <taxon>Lophotrochozoa</taxon>
        <taxon>Platyhelminthes</taxon>
        <taxon>Cestoda</taxon>
        <taxon>Eucestoda</taxon>
        <taxon>Cyclophyllidea</taxon>
        <taxon>Taeniidae</taxon>
        <taxon>Echinococcus</taxon>
    </lineage>
</organism>
<reference key="1">
    <citation type="journal article" date="2000" name="Mol. Biochem. Parasitol.">
        <title>Cloning and characterization of beta-tubulin genes from Echinococcus multilocularis.</title>
        <authorList>
            <person name="Brehm K."/>
            <person name="Kronthaler K."/>
            <person name="Jura H."/>
            <person name="Frosch M."/>
        </authorList>
    </citation>
    <scope>NUCLEOTIDE SEQUENCE [GENOMIC DNA]</scope>
    <source>
        <strain>H-95</strain>
    </source>
</reference>
<protein>
    <recommendedName>
        <fullName>Tubulin beta-1 chain</fullName>
    </recommendedName>
    <alternativeName>
        <fullName>Beta-tubulin 1</fullName>
    </alternativeName>
</protein>